<name>TGT_STAHJ</name>
<organism>
    <name type="scientific">Staphylococcus haemolyticus (strain JCSC1435)</name>
    <dbReference type="NCBI Taxonomy" id="279808"/>
    <lineage>
        <taxon>Bacteria</taxon>
        <taxon>Bacillati</taxon>
        <taxon>Bacillota</taxon>
        <taxon>Bacilli</taxon>
        <taxon>Bacillales</taxon>
        <taxon>Staphylococcaceae</taxon>
        <taxon>Staphylococcus</taxon>
    </lineage>
</organism>
<dbReference type="EC" id="2.4.2.29" evidence="1"/>
<dbReference type="EMBL" id="AP006716">
    <property type="protein sequence ID" value="BAE04591.1"/>
    <property type="molecule type" value="Genomic_DNA"/>
</dbReference>
<dbReference type="RefSeq" id="WP_011275580.1">
    <property type="nucleotide sequence ID" value="NC_007168.1"/>
</dbReference>
<dbReference type="SMR" id="Q4L6Y4"/>
<dbReference type="KEGG" id="sha:SH1282"/>
<dbReference type="eggNOG" id="COG0343">
    <property type="taxonomic scope" value="Bacteria"/>
</dbReference>
<dbReference type="HOGENOM" id="CLU_022060_0_1_9"/>
<dbReference type="OrthoDB" id="9805417at2"/>
<dbReference type="UniPathway" id="UPA00392"/>
<dbReference type="Proteomes" id="UP000000543">
    <property type="component" value="Chromosome"/>
</dbReference>
<dbReference type="GO" id="GO:0005829">
    <property type="term" value="C:cytosol"/>
    <property type="evidence" value="ECO:0007669"/>
    <property type="project" value="TreeGrafter"/>
</dbReference>
<dbReference type="GO" id="GO:0046872">
    <property type="term" value="F:metal ion binding"/>
    <property type="evidence" value="ECO:0007669"/>
    <property type="project" value="UniProtKB-KW"/>
</dbReference>
<dbReference type="GO" id="GO:0008479">
    <property type="term" value="F:tRNA-guanosine(34) queuine transglycosylase activity"/>
    <property type="evidence" value="ECO:0007669"/>
    <property type="project" value="UniProtKB-UniRule"/>
</dbReference>
<dbReference type="GO" id="GO:0008616">
    <property type="term" value="P:queuosine biosynthetic process"/>
    <property type="evidence" value="ECO:0007669"/>
    <property type="project" value="UniProtKB-UniRule"/>
</dbReference>
<dbReference type="GO" id="GO:0002099">
    <property type="term" value="P:tRNA wobble guanine modification"/>
    <property type="evidence" value="ECO:0007669"/>
    <property type="project" value="TreeGrafter"/>
</dbReference>
<dbReference type="GO" id="GO:0101030">
    <property type="term" value="P:tRNA-guanine transglycosylation"/>
    <property type="evidence" value="ECO:0007669"/>
    <property type="project" value="InterPro"/>
</dbReference>
<dbReference type="FunFam" id="3.20.20.105:FF:000001">
    <property type="entry name" value="Queuine tRNA-ribosyltransferase"/>
    <property type="match status" value="1"/>
</dbReference>
<dbReference type="Gene3D" id="3.20.20.105">
    <property type="entry name" value="Queuine tRNA-ribosyltransferase-like"/>
    <property type="match status" value="1"/>
</dbReference>
<dbReference type="HAMAP" id="MF_00168">
    <property type="entry name" value="Q_tRNA_Tgt"/>
    <property type="match status" value="1"/>
</dbReference>
<dbReference type="InterPro" id="IPR050076">
    <property type="entry name" value="ArchSynthase1/Queuine_TRR"/>
</dbReference>
<dbReference type="InterPro" id="IPR004803">
    <property type="entry name" value="TGT"/>
</dbReference>
<dbReference type="InterPro" id="IPR036511">
    <property type="entry name" value="TGT-like_sf"/>
</dbReference>
<dbReference type="InterPro" id="IPR002616">
    <property type="entry name" value="tRNA_ribo_trans-like"/>
</dbReference>
<dbReference type="NCBIfam" id="TIGR00430">
    <property type="entry name" value="Q_tRNA_tgt"/>
    <property type="match status" value="1"/>
</dbReference>
<dbReference type="NCBIfam" id="TIGR00449">
    <property type="entry name" value="tgt_general"/>
    <property type="match status" value="1"/>
</dbReference>
<dbReference type="PANTHER" id="PTHR46499">
    <property type="entry name" value="QUEUINE TRNA-RIBOSYLTRANSFERASE"/>
    <property type="match status" value="1"/>
</dbReference>
<dbReference type="PANTHER" id="PTHR46499:SF1">
    <property type="entry name" value="QUEUINE TRNA-RIBOSYLTRANSFERASE"/>
    <property type="match status" value="1"/>
</dbReference>
<dbReference type="Pfam" id="PF01702">
    <property type="entry name" value="TGT"/>
    <property type="match status" value="1"/>
</dbReference>
<dbReference type="SUPFAM" id="SSF51713">
    <property type="entry name" value="tRNA-guanine transglycosylase"/>
    <property type="match status" value="1"/>
</dbReference>
<proteinExistence type="inferred from homology"/>
<keyword id="KW-0328">Glycosyltransferase</keyword>
<keyword id="KW-0479">Metal-binding</keyword>
<keyword id="KW-0671">Queuosine biosynthesis</keyword>
<keyword id="KW-0808">Transferase</keyword>
<keyword id="KW-0819">tRNA processing</keyword>
<keyword id="KW-0862">Zinc</keyword>
<gene>
    <name evidence="1" type="primary">tgt</name>
    <name type="ordered locus">SH1282</name>
</gene>
<sequence>MPAVTYEHIKTCKQSGARLGIVHTPHGSFETPMFMPVGTKATVKTMSPEELRQIEAKIILGNTYHLWLQPGNDIIKQVGGLHNFMNWDGPILTDSGGFQVFSLSNLRKITEESVEFRHHTNGLKLFLSPEKSMEIQNDLGSDIMMAFDECPPMPSEYKYVKDSIERTTRWAERCLNAHKRPEDQALFGIIQGGEYKDLREQSAKELVALDFPGYAIGGLSVGEPKPVMYEMVEHTVQYMPDDKPRYLMGVGSPDALIECSIRGMDMFDCVLPTRIARNGTCMTSNGRLVIKNAKYANDFKPLDENCDCYTCKNYSRAYIRHLIKAEETFGIRLTTIHNLHFLLKLMEDIRQAIREDRLLDFKDEFFEQYGLNVENPKNF</sequence>
<accession>Q4L6Y4</accession>
<evidence type="ECO:0000255" key="1">
    <source>
        <dbReference type="HAMAP-Rule" id="MF_00168"/>
    </source>
</evidence>
<feature type="chain" id="PRO_1000016865" description="Queuine tRNA-ribosyltransferase">
    <location>
        <begin position="1"/>
        <end position="379"/>
    </location>
</feature>
<feature type="region of interest" description="RNA binding" evidence="1">
    <location>
        <begin position="249"/>
        <end position="255"/>
    </location>
</feature>
<feature type="region of interest" description="RNA binding; important for wobble base 34 recognition" evidence="1">
    <location>
        <begin position="273"/>
        <end position="277"/>
    </location>
</feature>
<feature type="active site" description="Proton acceptor" evidence="1">
    <location>
        <position position="94"/>
    </location>
</feature>
<feature type="active site" description="Nucleophile" evidence="1">
    <location>
        <position position="268"/>
    </location>
</feature>
<feature type="binding site" evidence="1">
    <location>
        <begin position="94"/>
        <end position="98"/>
    </location>
    <ligand>
        <name>substrate</name>
    </ligand>
</feature>
<feature type="binding site" evidence="1">
    <location>
        <position position="148"/>
    </location>
    <ligand>
        <name>substrate</name>
    </ligand>
</feature>
<feature type="binding site" evidence="1">
    <location>
        <position position="191"/>
    </location>
    <ligand>
        <name>substrate</name>
    </ligand>
</feature>
<feature type="binding site" evidence="1">
    <location>
        <position position="218"/>
    </location>
    <ligand>
        <name>substrate</name>
    </ligand>
</feature>
<feature type="binding site" evidence="1">
    <location>
        <position position="306"/>
    </location>
    <ligand>
        <name>Zn(2+)</name>
        <dbReference type="ChEBI" id="CHEBI:29105"/>
    </ligand>
</feature>
<feature type="binding site" evidence="1">
    <location>
        <position position="308"/>
    </location>
    <ligand>
        <name>Zn(2+)</name>
        <dbReference type="ChEBI" id="CHEBI:29105"/>
    </ligand>
</feature>
<feature type="binding site" evidence="1">
    <location>
        <position position="311"/>
    </location>
    <ligand>
        <name>Zn(2+)</name>
        <dbReference type="ChEBI" id="CHEBI:29105"/>
    </ligand>
</feature>
<feature type="binding site" evidence="1">
    <location>
        <position position="337"/>
    </location>
    <ligand>
        <name>Zn(2+)</name>
        <dbReference type="ChEBI" id="CHEBI:29105"/>
    </ligand>
</feature>
<reference key="1">
    <citation type="journal article" date="2005" name="J. Bacteriol.">
        <title>Whole-genome sequencing of Staphylococcus haemolyticus uncovers the extreme plasticity of its genome and the evolution of human-colonizing staphylococcal species.</title>
        <authorList>
            <person name="Takeuchi F."/>
            <person name="Watanabe S."/>
            <person name="Baba T."/>
            <person name="Yuzawa H."/>
            <person name="Ito T."/>
            <person name="Morimoto Y."/>
            <person name="Kuroda M."/>
            <person name="Cui L."/>
            <person name="Takahashi M."/>
            <person name="Ankai A."/>
            <person name="Baba S."/>
            <person name="Fukui S."/>
            <person name="Lee J.C."/>
            <person name="Hiramatsu K."/>
        </authorList>
    </citation>
    <scope>NUCLEOTIDE SEQUENCE [LARGE SCALE GENOMIC DNA]</scope>
    <source>
        <strain>JCSC1435</strain>
    </source>
</reference>
<comment type="function">
    <text evidence="1">Catalyzes the base-exchange of a guanine (G) residue with the queuine precursor 7-aminomethyl-7-deazaguanine (PreQ1) at position 34 (anticodon wobble position) in tRNAs with GU(N) anticodons (tRNA-Asp, -Asn, -His and -Tyr). Catalysis occurs through a double-displacement mechanism. The nucleophile active site attacks the C1' of nucleotide 34 to detach the guanine base from the RNA, forming a covalent enzyme-RNA intermediate. The proton acceptor active site deprotonates the incoming PreQ1, allowing a nucleophilic attack on the C1' of the ribose to form the product. After dissociation, two additional enzymatic reactions on the tRNA convert PreQ1 to queuine (Q), resulting in the hypermodified nucleoside queuosine (7-(((4,5-cis-dihydroxy-2-cyclopenten-1-yl)amino)methyl)-7-deazaguanosine).</text>
</comment>
<comment type="catalytic activity">
    <reaction evidence="1">
        <text>7-aminomethyl-7-carbaguanine + guanosine(34) in tRNA = 7-aminomethyl-7-carbaguanosine(34) in tRNA + guanine</text>
        <dbReference type="Rhea" id="RHEA:24104"/>
        <dbReference type="Rhea" id="RHEA-COMP:10341"/>
        <dbReference type="Rhea" id="RHEA-COMP:10342"/>
        <dbReference type="ChEBI" id="CHEBI:16235"/>
        <dbReference type="ChEBI" id="CHEBI:58703"/>
        <dbReference type="ChEBI" id="CHEBI:74269"/>
        <dbReference type="ChEBI" id="CHEBI:82833"/>
        <dbReference type="EC" id="2.4.2.29"/>
    </reaction>
</comment>
<comment type="cofactor">
    <cofactor evidence="1">
        <name>Zn(2+)</name>
        <dbReference type="ChEBI" id="CHEBI:29105"/>
    </cofactor>
    <text evidence="1">Binds 1 zinc ion per subunit.</text>
</comment>
<comment type="pathway">
    <text evidence="1">tRNA modification; tRNA-queuosine biosynthesis.</text>
</comment>
<comment type="subunit">
    <text evidence="1">Homodimer. Within each dimer, one monomer is responsible for RNA recognition and catalysis, while the other monomer binds to the replacement base PreQ1.</text>
</comment>
<comment type="similarity">
    <text evidence="1">Belongs to the queuine tRNA-ribosyltransferase family.</text>
</comment>
<protein>
    <recommendedName>
        <fullName evidence="1">Queuine tRNA-ribosyltransferase</fullName>
        <ecNumber evidence="1">2.4.2.29</ecNumber>
    </recommendedName>
    <alternativeName>
        <fullName evidence="1">Guanine insertion enzyme</fullName>
    </alternativeName>
    <alternativeName>
        <fullName evidence="1">tRNA-guanine transglycosylase</fullName>
    </alternativeName>
</protein>